<organism>
    <name type="scientific">Escherichia coli O8 (strain IAI1)</name>
    <dbReference type="NCBI Taxonomy" id="585034"/>
    <lineage>
        <taxon>Bacteria</taxon>
        <taxon>Pseudomonadati</taxon>
        <taxon>Pseudomonadota</taxon>
        <taxon>Gammaproteobacteria</taxon>
        <taxon>Enterobacterales</taxon>
        <taxon>Enterobacteriaceae</taxon>
        <taxon>Escherichia</taxon>
    </lineage>
</organism>
<proteinExistence type="inferred from homology"/>
<evidence type="ECO:0000255" key="1">
    <source>
        <dbReference type="HAMAP-Rule" id="MF_00337"/>
    </source>
</evidence>
<reference key="1">
    <citation type="journal article" date="2009" name="PLoS Genet.">
        <title>Organised genome dynamics in the Escherichia coli species results in highly diverse adaptive paths.</title>
        <authorList>
            <person name="Touchon M."/>
            <person name="Hoede C."/>
            <person name="Tenaillon O."/>
            <person name="Barbe V."/>
            <person name="Baeriswyl S."/>
            <person name="Bidet P."/>
            <person name="Bingen E."/>
            <person name="Bonacorsi S."/>
            <person name="Bouchier C."/>
            <person name="Bouvet O."/>
            <person name="Calteau A."/>
            <person name="Chiapello H."/>
            <person name="Clermont O."/>
            <person name="Cruveiller S."/>
            <person name="Danchin A."/>
            <person name="Diard M."/>
            <person name="Dossat C."/>
            <person name="Karoui M.E."/>
            <person name="Frapy E."/>
            <person name="Garry L."/>
            <person name="Ghigo J.M."/>
            <person name="Gilles A.M."/>
            <person name="Johnson J."/>
            <person name="Le Bouguenec C."/>
            <person name="Lescat M."/>
            <person name="Mangenot S."/>
            <person name="Martinez-Jehanne V."/>
            <person name="Matic I."/>
            <person name="Nassif X."/>
            <person name="Oztas S."/>
            <person name="Petit M.A."/>
            <person name="Pichon C."/>
            <person name="Rouy Z."/>
            <person name="Ruf C.S."/>
            <person name="Schneider D."/>
            <person name="Tourret J."/>
            <person name="Vacherie B."/>
            <person name="Vallenet D."/>
            <person name="Medigue C."/>
            <person name="Rocha E.P.C."/>
            <person name="Denamur E."/>
        </authorList>
    </citation>
    <scope>NUCLEOTIDE SEQUENCE [LARGE SCALE GENOMIC DNA]</scope>
    <source>
        <strain>IAI1</strain>
    </source>
</reference>
<name>EX7S_ECO8A</name>
<sequence length="80" mass="8952">MPKKNEAPASFEKALSELEQIVTRLESGDLPLEEALNEFERGVQLARQGQAKLQQAEQRVQILLSDNEDASLTPFTPDNE</sequence>
<keyword id="KW-0963">Cytoplasm</keyword>
<keyword id="KW-0269">Exonuclease</keyword>
<keyword id="KW-0378">Hydrolase</keyword>
<keyword id="KW-0540">Nuclease</keyword>
<accession>B7M3R1</accession>
<dbReference type="EC" id="3.1.11.6" evidence="1"/>
<dbReference type="EMBL" id="CU928160">
    <property type="protein sequence ID" value="CAQ97294.1"/>
    <property type="molecule type" value="Genomic_DNA"/>
</dbReference>
<dbReference type="RefSeq" id="WP_001124935.1">
    <property type="nucleotide sequence ID" value="NC_011741.1"/>
</dbReference>
<dbReference type="SMR" id="B7M3R1"/>
<dbReference type="GeneID" id="75202844"/>
<dbReference type="KEGG" id="ecr:ECIAI1_0422"/>
<dbReference type="HOGENOM" id="CLU_145918_3_3_6"/>
<dbReference type="GO" id="GO:0005829">
    <property type="term" value="C:cytosol"/>
    <property type="evidence" value="ECO:0007669"/>
    <property type="project" value="TreeGrafter"/>
</dbReference>
<dbReference type="GO" id="GO:0009318">
    <property type="term" value="C:exodeoxyribonuclease VII complex"/>
    <property type="evidence" value="ECO:0007669"/>
    <property type="project" value="InterPro"/>
</dbReference>
<dbReference type="GO" id="GO:0008855">
    <property type="term" value="F:exodeoxyribonuclease VII activity"/>
    <property type="evidence" value="ECO:0007669"/>
    <property type="project" value="UniProtKB-UniRule"/>
</dbReference>
<dbReference type="GO" id="GO:0006308">
    <property type="term" value="P:DNA catabolic process"/>
    <property type="evidence" value="ECO:0007669"/>
    <property type="project" value="UniProtKB-UniRule"/>
</dbReference>
<dbReference type="FunFam" id="1.10.287.1040:FF:000001">
    <property type="entry name" value="Exodeoxyribonuclease 7 small subunit"/>
    <property type="match status" value="1"/>
</dbReference>
<dbReference type="Gene3D" id="1.10.287.1040">
    <property type="entry name" value="Exonuclease VII, small subunit"/>
    <property type="match status" value="1"/>
</dbReference>
<dbReference type="HAMAP" id="MF_00337">
    <property type="entry name" value="Exonuc_7_S"/>
    <property type="match status" value="1"/>
</dbReference>
<dbReference type="InterPro" id="IPR003761">
    <property type="entry name" value="Exonuc_VII_S"/>
</dbReference>
<dbReference type="InterPro" id="IPR037004">
    <property type="entry name" value="Exonuc_VII_ssu_sf"/>
</dbReference>
<dbReference type="NCBIfam" id="NF002137">
    <property type="entry name" value="PRK00977.1-1"/>
    <property type="match status" value="1"/>
</dbReference>
<dbReference type="NCBIfam" id="NF002140">
    <property type="entry name" value="PRK00977.1-4"/>
    <property type="match status" value="1"/>
</dbReference>
<dbReference type="NCBIfam" id="TIGR01280">
    <property type="entry name" value="xseB"/>
    <property type="match status" value="1"/>
</dbReference>
<dbReference type="PANTHER" id="PTHR34137">
    <property type="entry name" value="EXODEOXYRIBONUCLEASE 7 SMALL SUBUNIT"/>
    <property type="match status" value="1"/>
</dbReference>
<dbReference type="PANTHER" id="PTHR34137:SF1">
    <property type="entry name" value="EXODEOXYRIBONUCLEASE 7 SMALL SUBUNIT"/>
    <property type="match status" value="1"/>
</dbReference>
<dbReference type="Pfam" id="PF02609">
    <property type="entry name" value="Exonuc_VII_S"/>
    <property type="match status" value="1"/>
</dbReference>
<dbReference type="PIRSF" id="PIRSF006488">
    <property type="entry name" value="Exonuc_VII_S"/>
    <property type="match status" value="1"/>
</dbReference>
<dbReference type="SUPFAM" id="SSF116842">
    <property type="entry name" value="XseB-like"/>
    <property type="match status" value="1"/>
</dbReference>
<protein>
    <recommendedName>
        <fullName evidence="1">Exodeoxyribonuclease 7 small subunit</fullName>
        <ecNumber evidence="1">3.1.11.6</ecNumber>
    </recommendedName>
    <alternativeName>
        <fullName evidence="1">Exodeoxyribonuclease VII small subunit</fullName>
        <shortName evidence="1">Exonuclease VII small subunit</shortName>
    </alternativeName>
</protein>
<gene>
    <name evidence="1" type="primary">xseB</name>
    <name type="ordered locus">ECIAI1_0422</name>
</gene>
<feature type="chain" id="PRO_1000119922" description="Exodeoxyribonuclease 7 small subunit">
    <location>
        <begin position="1"/>
        <end position="80"/>
    </location>
</feature>
<comment type="function">
    <text evidence="1">Bidirectionally degrades single-stranded DNA into large acid-insoluble oligonucleotides, which are then degraded further into small acid-soluble oligonucleotides.</text>
</comment>
<comment type="catalytic activity">
    <reaction evidence="1">
        <text>Exonucleolytic cleavage in either 5'- to 3'- or 3'- to 5'-direction to yield nucleoside 5'-phosphates.</text>
        <dbReference type="EC" id="3.1.11.6"/>
    </reaction>
</comment>
<comment type="subunit">
    <text evidence="1">Heterooligomer composed of large and small subunits.</text>
</comment>
<comment type="subcellular location">
    <subcellularLocation>
        <location evidence="1">Cytoplasm</location>
    </subcellularLocation>
</comment>
<comment type="similarity">
    <text evidence="1">Belongs to the XseB family.</text>
</comment>